<sequence length="211" mass="23614">MAPLTEVGAFLGGLEGLSQQVGSHFLLPPAGERPPLLGERRGALERGARGGPGSVELAHLHGILRRRQLYCRTGFHLQILPDGTVQGTRQDHSLFGILEFISVAVGLVSIRGVDSGLYLGMNDKGELYGSEKLTSECIFREQFEENWYNTYSSNIYKHGDTGRRYFVALNKDGTPRDGARSKRHQKFTHFLPRPVDPERVPELYKDLLMYT</sequence>
<accession>Q9ESL9</accession>
<accession>Q8C7A8</accession>
<feature type="chain" id="PRO_0000147617" description="Fibroblast growth factor 20">
    <location>
        <begin position="1"/>
        <end position="211"/>
    </location>
</feature>
<feature type="sequence conflict" description="In Ref. 1; BAB16406." evidence="2" ref="1">
    <original>S</original>
    <variation>G</variation>
    <location>
        <position position="18"/>
    </location>
</feature>
<feature type="sequence conflict" description="In Ref. 1; BAB16406." evidence="2" ref="1">
    <original>D</original>
    <variation>N</variation>
    <location>
        <position position="160"/>
    </location>
</feature>
<feature type="sequence conflict" description="In Ref. 1; BAB16406." evidence="2" ref="1">
    <original>H</original>
    <variation>R</variation>
    <location>
        <position position="184"/>
    </location>
</feature>
<feature type="sequence conflict" description="In Ref. 1; BAB16406." evidence="2" ref="1">
    <original>T</original>
    <variation>TG</variation>
    <location>
        <position position="211"/>
    </location>
</feature>
<organism>
    <name type="scientific">Mus musculus</name>
    <name type="common">Mouse</name>
    <dbReference type="NCBI Taxonomy" id="10090"/>
    <lineage>
        <taxon>Eukaryota</taxon>
        <taxon>Metazoa</taxon>
        <taxon>Chordata</taxon>
        <taxon>Craniata</taxon>
        <taxon>Vertebrata</taxon>
        <taxon>Euteleostomi</taxon>
        <taxon>Mammalia</taxon>
        <taxon>Eutheria</taxon>
        <taxon>Euarchontoglires</taxon>
        <taxon>Glires</taxon>
        <taxon>Rodentia</taxon>
        <taxon>Myomorpha</taxon>
        <taxon>Muroidea</taxon>
        <taxon>Muridae</taxon>
        <taxon>Murinae</taxon>
        <taxon>Mus</taxon>
        <taxon>Mus</taxon>
    </lineage>
</organism>
<proteinExistence type="evidence at transcript level"/>
<evidence type="ECO:0000250" key="1"/>
<evidence type="ECO:0000305" key="2"/>
<protein>
    <recommendedName>
        <fullName>Fibroblast growth factor 20</fullName>
        <shortName>FGF-20</shortName>
    </recommendedName>
</protein>
<keyword id="KW-0339">Growth factor</keyword>
<keyword id="KW-1185">Reference proteome</keyword>
<keyword id="KW-0964">Secreted</keyword>
<name>FGF20_MOUSE</name>
<reference key="1">
    <citation type="submission" date="2000-09" db="EMBL/GenBank/DDBJ databases">
        <title>Mus musculus mRNA for FGF-20 (FGF20).</title>
        <authorList>
            <person name="Itoh N."/>
        </authorList>
    </citation>
    <scope>NUCLEOTIDE SEQUENCE [MRNA]</scope>
</reference>
<reference key="2">
    <citation type="journal article" date="2005" name="Science">
        <title>The transcriptional landscape of the mammalian genome.</title>
        <authorList>
            <person name="Carninci P."/>
            <person name="Kasukawa T."/>
            <person name="Katayama S."/>
            <person name="Gough J."/>
            <person name="Frith M.C."/>
            <person name="Maeda N."/>
            <person name="Oyama R."/>
            <person name="Ravasi T."/>
            <person name="Lenhard B."/>
            <person name="Wells C."/>
            <person name="Kodzius R."/>
            <person name="Shimokawa K."/>
            <person name="Bajic V.B."/>
            <person name="Brenner S.E."/>
            <person name="Batalov S."/>
            <person name="Forrest A.R."/>
            <person name="Zavolan M."/>
            <person name="Davis M.J."/>
            <person name="Wilming L.G."/>
            <person name="Aidinis V."/>
            <person name="Allen J.E."/>
            <person name="Ambesi-Impiombato A."/>
            <person name="Apweiler R."/>
            <person name="Aturaliya R.N."/>
            <person name="Bailey T.L."/>
            <person name="Bansal M."/>
            <person name="Baxter L."/>
            <person name="Beisel K.W."/>
            <person name="Bersano T."/>
            <person name="Bono H."/>
            <person name="Chalk A.M."/>
            <person name="Chiu K.P."/>
            <person name="Choudhary V."/>
            <person name="Christoffels A."/>
            <person name="Clutterbuck D.R."/>
            <person name="Crowe M.L."/>
            <person name="Dalla E."/>
            <person name="Dalrymple B.P."/>
            <person name="de Bono B."/>
            <person name="Della Gatta G."/>
            <person name="di Bernardo D."/>
            <person name="Down T."/>
            <person name="Engstrom P."/>
            <person name="Fagiolini M."/>
            <person name="Faulkner G."/>
            <person name="Fletcher C.F."/>
            <person name="Fukushima T."/>
            <person name="Furuno M."/>
            <person name="Futaki S."/>
            <person name="Gariboldi M."/>
            <person name="Georgii-Hemming P."/>
            <person name="Gingeras T.R."/>
            <person name="Gojobori T."/>
            <person name="Green R.E."/>
            <person name="Gustincich S."/>
            <person name="Harbers M."/>
            <person name="Hayashi Y."/>
            <person name="Hensch T.K."/>
            <person name="Hirokawa N."/>
            <person name="Hill D."/>
            <person name="Huminiecki L."/>
            <person name="Iacono M."/>
            <person name="Ikeo K."/>
            <person name="Iwama A."/>
            <person name="Ishikawa T."/>
            <person name="Jakt M."/>
            <person name="Kanapin A."/>
            <person name="Katoh M."/>
            <person name="Kawasawa Y."/>
            <person name="Kelso J."/>
            <person name="Kitamura H."/>
            <person name="Kitano H."/>
            <person name="Kollias G."/>
            <person name="Krishnan S.P."/>
            <person name="Kruger A."/>
            <person name="Kummerfeld S.K."/>
            <person name="Kurochkin I.V."/>
            <person name="Lareau L.F."/>
            <person name="Lazarevic D."/>
            <person name="Lipovich L."/>
            <person name="Liu J."/>
            <person name="Liuni S."/>
            <person name="McWilliam S."/>
            <person name="Madan Babu M."/>
            <person name="Madera M."/>
            <person name="Marchionni L."/>
            <person name="Matsuda H."/>
            <person name="Matsuzawa S."/>
            <person name="Miki H."/>
            <person name="Mignone F."/>
            <person name="Miyake S."/>
            <person name="Morris K."/>
            <person name="Mottagui-Tabar S."/>
            <person name="Mulder N."/>
            <person name="Nakano N."/>
            <person name="Nakauchi H."/>
            <person name="Ng P."/>
            <person name="Nilsson R."/>
            <person name="Nishiguchi S."/>
            <person name="Nishikawa S."/>
            <person name="Nori F."/>
            <person name="Ohara O."/>
            <person name="Okazaki Y."/>
            <person name="Orlando V."/>
            <person name="Pang K.C."/>
            <person name="Pavan W.J."/>
            <person name="Pavesi G."/>
            <person name="Pesole G."/>
            <person name="Petrovsky N."/>
            <person name="Piazza S."/>
            <person name="Reed J."/>
            <person name="Reid J.F."/>
            <person name="Ring B.Z."/>
            <person name="Ringwald M."/>
            <person name="Rost B."/>
            <person name="Ruan Y."/>
            <person name="Salzberg S.L."/>
            <person name="Sandelin A."/>
            <person name="Schneider C."/>
            <person name="Schoenbach C."/>
            <person name="Sekiguchi K."/>
            <person name="Semple C.A."/>
            <person name="Seno S."/>
            <person name="Sessa L."/>
            <person name="Sheng Y."/>
            <person name="Shibata Y."/>
            <person name="Shimada H."/>
            <person name="Shimada K."/>
            <person name="Silva D."/>
            <person name="Sinclair B."/>
            <person name="Sperling S."/>
            <person name="Stupka E."/>
            <person name="Sugiura K."/>
            <person name="Sultana R."/>
            <person name="Takenaka Y."/>
            <person name="Taki K."/>
            <person name="Tammoja K."/>
            <person name="Tan S.L."/>
            <person name="Tang S."/>
            <person name="Taylor M.S."/>
            <person name="Tegner J."/>
            <person name="Teichmann S.A."/>
            <person name="Ueda H.R."/>
            <person name="van Nimwegen E."/>
            <person name="Verardo R."/>
            <person name="Wei C.L."/>
            <person name="Yagi K."/>
            <person name="Yamanishi H."/>
            <person name="Zabarovsky E."/>
            <person name="Zhu S."/>
            <person name="Zimmer A."/>
            <person name="Hide W."/>
            <person name="Bult C."/>
            <person name="Grimmond S.M."/>
            <person name="Teasdale R.D."/>
            <person name="Liu E.T."/>
            <person name="Brusic V."/>
            <person name="Quackenbush J."/>
            <person name="Wahlestedt C."/>
            <person name="Mattick J.S."/>
            <person name="Hume D.A."/>
            <person name="Kai C."/>
            <person name="Sasaki D."/>
            <person name="Tomaru Y."/>
            <person name="Fukuda S."/>
            <person name="Kanamori-Katayama M."/>
            <person name="Suzuki M."/>
            <person name="Aoki J."/>
            <person name="Arakawa T."/>
            <person name="Iida J."/>
            <person name="Imamura K."/>
            <person name="Itoh M."/>
            <person name="Kato T."/>
            <person name="Kawaji H."/>
            <person name="Kawagashira N."/>
            <person name="Kawashima T."/>
            <person name="Kojima M."/>
            <person name="Kondo S."/>
            <person name="Konno H."/>
            <person name="Nakano K."/>
            <person name="Ninomiya N."/>
            <person name="Nishio T."/>
            <person name="Okada M."/>
            <person name="Plessy C."/>
            <person name="Shibata K."/>
            <person name="Shiraki T."/>
            <person name="Suzuki S."/>
            <person name="Tagami M."/>
            <person name="Waki K."/>
            <person name="Watahiki A."/>
            <person name="Okamura-Oho Y."/>
            <person name="Suzuki H."/>
            <person name="Kawai J."/>
            <person name="Hayashizaki Y."/>
        </authorList>
    </citation>
    <scope>NUCLEOTIDE SEQUENCE [LARGE SCALE MRNA]</scope>
    <source>
        <strain>C57BL/6J</strain>
        <tissue>Heart</tissue>
    </source>
</reference>
<comment type="function">
    <text>Neurotrophic factor that regulates central nervous development and function.</text>
</comment>
<comment type="subunit">
    <text evidence="1">Homodimer. Interacts with FGFR2 and FGFR4. Affinity between fibroblast growth factors (FGFs) and their receptors is increased by heparan sulfate glycosaminoglycans that function as coreceptors (By similarity).</text>
</comment>
<comment type="subcellular location">
    <subcellularLocation>
        <location evidence="1">Secreted</location>
    </subcellularLocation>
</comment>
<comment type="similarity">
    <text evidence="2">Belongs to the heparin-binding growth factors family.</text>
</comment>
<dbReference type="EMBL" id="AB049218">
    <property type="protein sequence ID" value="BAB16406.1"/>
    <property type="molecule type" value="mRNA"/>
</dbReference>
<dbReference type="EMBL" id="AK052233">
    <property type="protein sequence ID" value="BAC34892.1"/>
    <property type="molecule type" value="mRNA"/>
</dbReference>
<dbReference type="CCDS" id="CCDS52544.1"/>
<dbReference type="RefSeq" id="NP_085113.2">
    <property type="nucleotide sequence ID" value="NM_030610.3"/>
</dbReference>
<dbReference type="SMR" id="Q9ESL9"/>
<dbReference type="FunCoup" id="Q9ESL9">
    <property type="interactions" value="947"/>
</dbReference>
<dbReference type="STRING" id="10090.ENSMUSP00000034014"/>
<dbReference type="PhosphoSitePlus" id="Q9ESL9"/>
<dbReference type="PaxDb" id="10090-ENSMUSP00000034014"/>
<dbReference type="Antibodypedia" id="58634">
    <property type="antibodies" value="171 antibodies from 30 providers"/>
</dbReference>
<dbReference type="DNASU" id="80857"/>
<dbReference type="Ensembl" id="ENSMUST00000034014.14">
    <property type="protein sequence ID" value="ENSMUSP00000034014.8"/>
    <property type="gene ID" value="ENSMUSG00000031603.15"/>
</dbReference>
<dbReference type="GeneID" id="80857"/>
<dbReference type="KEGG" id="mmu:80857"/>
<dbReference type="UCSC" id="uc009lml.2">
    <property type="organism name" value="mouse"/>
</dbReference>
<dbReference type="AGR" id="MGI:1891346"/>
<dbReference type="CTD" id="26281"/>
<dbReference type="MGI" id="MGI:1891346">
    <property type="gene designation" value="Fgf20"/>
</dbReference>
<dbReference type="VEuPathDB" id="HostDB:ENSMUSG00000031603"/>
<dbReference type="eggNOG" id="KOG3885">
    <property type="taxonomic scope" value="Eukaryota"/>
</dbReference>
<dbReference type="GeneTree" id="ENSGT00940000158380"/>
<dbReference type="HOGENOM" id="CLU_081609_0_0_1"/>
<dbReference type="InParanoid" id="Q9ESL9"/>
<dbReference type="OMA" id="NEAVKHP"/>
<dbReference type="OrthoDB" id="6158176at2759"/>
<dbReference type="PhylomeDB" id="Q9ESL9"/>
<dbReference type="TreeFam" id="TF317805"/>
<dbReference type="Reactome" id="R-MMU-109704">
    <property type="pathway name" value="PI3K Cascade"/>
</dbReference>
<dbReference type="Reactome" id="R-MMU-1257604">
    <property type="pathway name" value="PIP3 activates AKT signaling"/>
</dbReference>
<dbReference type="Reactome" id="R-MMU-190322">
    <property type="pathway name" value="FGFR4 ligand binding and activation"/>
</dbReference>
<dbReference type="Reactome" id="R-MMU-190371">
    <property type="pathway name" value="FGFR3b ligand binding and activation"/>
</dbReference>
<dbReference type="Reactome" id="R-MMU-190372">
    <property type="pathway name" value="FGFR3c ligand binding and activation"/>
</dbReference>
<dbReference type="Reactome" id="R-MMU-190373">
    <property type="pathway name" value="FGFR1c ligand binding and activation"/>
</dbReference>
<dbReference type="Reactome" id="R-MMU-190375">
    <property type="pathway name" value="FGFR2c ligand binding and activation"/>
</dbReference>
<dbReference type="Reactome" id="R-MMU-5654219">
    <property type="pathway name" value="Phospholipase C-mediated cascade: FGFR1"/>
</dbReference>
<dbReference type="Reactome" id="R-MMU-5654221">
    <property type="pathway name" value="Phospholipase C-mediated cascade, FGFR2"/>
</dbReference>
<dbReference type="Reactome" id="R-MMU-5654227">
    <property type="pathway name" value="Phospholipase C-mediated cascade, FGFR3"/>
</dbReference>
<dbReference type="Reactome" id="R-MMU-5654228">
    <property type="pathway name" value="Phospholipase C-mediated cascade, FGFR4"/>
</dbReference>
<dbReference type="Reactome" id="R-MMU-5654687">
    <property type="pathway name" value="Downstream signaling of activated FGFR1"/>
</dbReference>
<dbReference type="Reactome" id="R-MMU-5654688">
    <property type="pathway name" value="SHC-mediated cascade:FGFR1"/>
</dbReference>
<dbReference type="Reactome" id="R-MMU-5654689">
    <property type="pathway name" value="PI-3K cascade:FGFR1"/>
</dbReference>
<dbReference type="Reactome" id="R-MMU-5654693">
    <property type="pathway name" value="FRS-mediated FGFR1 signaling"/>
</dbReference>
<dbReference type="Reactome" id="R-MMU-5654695">
    <property type="pathway name" value="PI-3K cascade:FGFR2"/>
</dbReference>
<dbReference type="Reactome" id="R-MMU-5654699">
    <property type="pathway name" value="SHC-mediated cascade:FGFR2"/>
</dbReference>
<dbReference type="Reactome" id="R-MMU-5654700">
    <property type="pathway name" value="FRS-mediated FGFR2 signaling"/>
</dbReference>
<dbReference type="Reactome" id="R-MMU-5654704">
    <property type="pathway name" value="SHC-mediated cascade:FGFR3"/>
</dbReference>
<dbReference type="Reactome" id="R-MMU-5654706">
    <property type="pathway name" value="FRS-mediated FGFR3 signaling"/>
</dbReference>
<dbReference type="Reactome" id="R-MMU-5654710">
    <property type="pathway name" value="PI-3K cascade:FGFR3"/>
</dbReference>
<dbReference type="Reactome" id="R-MMU-5654712">
    <property type="pathway name" value="FRS-mediated FGFR4 signaling"/>
</dbReference>
<dbReference type="Reactome" id="R-MMU-5654719">
    <property type="pathway name" value="SHC-mediated cascade:FGFR4"/>
</dbReference>
<dbReference type="Reactome" id="R-MMU-5654720">
    <property type="pathway name" value="PI-3K cascade:FGFR4"/>
</dbReference>
<dbReference type="Reactome" id="R-MMU-5654726">
    <property type="pathway name" value="Negative regulation of FGFR1 signaling"/>
</dbReference>
<dbReference type="Reactome" id="R-MMU-5654727">
    <property type="pathway name" value="Negative regulation of FGFR2 signaling"/>
</dbReference>
<dbReference type="Reactome" id="R-MMU-5654732">
    <property type="pathway name" value="Negative regulation of FGFR3 signaling"/>
</dbReference>
<dbReference type="Reactome" id="R-MMU-5654733">
    <property type="pathway name" value="Negative regulation of FGFR4 signaling"/>
</dbReference>
<dbReference type="Reactome" id="R-MMU-5673001">
    <property type="pathway name" value="RAF/MAP kinase cascade"/>
</dbReference>
<dbReference type="Reactome" id="R-MMU-6811558">
    <property type="pathway name" value="PI5P, PP2A and IER3 Regulate PI3K/AKT Signaling"/>
</dbReference>
<dbReference type="BioGRID-ORCS" id="80857">
    <property type="hits" value="3 hits in 79 CRISPR screens"/>
</dbReference>
<dbReference type="PRO" id="PR:Q9ESL9"/>
<dbReference type="Proteomes" id="UP000000589">
    <property type="component" value="Chromosome 8"/>
</dbReference>
<dbReference type="RNAct" id="Q9ESL9">
    <property type="molecule type" value="protein"/>
</dbReference>
<dbReference type="Bgee" id="ENSMUSG00000031603">
    <property type="expression patterns" value="Expressed in coronal suture and 56 other cell types or tissues"/>
</dbReference>
<dbReference type="ExpressionAtlas" id="Q9ESL9">
    <property type="expression patterns" value="baseline and differential"/>
</dbReference>
<dbReference type="GO" id="GO:0005576">
    <property type="term" value="C:extracellular region"/>
    <property type="evidence" value="ECO:0007669"/>
    <property type="project" value="UniProtKB-SubCell"/>
</dbReference>
<dbReference type="GO" id="GO:0005104">
    <property type="term" value="F:fibroblast growth factor receptor binding"/>
    <property type="evidence" value="ECO:0000266"/>
    <property type="project" value="MGI"/>
</dbReference>
<dbReference type="GO" id="GO:0008083">
    <property type="term" value="F:growth factor activity"/>
    <property type="evidence" value="ECO:0000250"/>
    <property type="project" value="ParkinsonsUK-UCL"/>
</dbReference>
<dbReference type="GO" id="GO:0090722">
    <property type="term" value="F:receptor-receptor interaction"/>
    <property type="evidence" value="ECO:0007669"/>
    <property type="project" value="Ensembl"/>
</dbReference>
<dbReference type="GO" id="GO:0030154">
    <property type="term" value="P:cell differentiation"/>
    <property type="evidence" value="ECO:0000315"/>
    <property type="project" value="MGI"/>
</dbReference>
<dbReference type="GO" id="GO:0008543">
    <property type="term" value="P:fibroblast growth factor receptor signaling pathway"/>
    <property type="evidence" value="ECO:0000266"/>
    <property type="project" value="MGI"/>
</dbReference>
<dbReference type="GO" id="GO:0042491">
    <property type="term" value="P:inner ear auditory receptor cell differentiation"/>
    <property type="evidence" value="ECO:0000315"/>
    <property type="project" value="MGI"/>
</dbReference>
<dbReference type="GO" id="GO:0043524">
    <property type="term" value="P:negative regulation of neuron apoptotic process"/>
    <property type="evidence" value="ECO:0007669"/>
    <property type="project" value="Ensembl"/>
</dbReference>
<dbReference type="GO" id="GO:0008284">
    <property type="term" value="P:positive regulation of cell population proliferation"/>
    <property type="evidence" value="ECO:0000266"/>
    <property type="project" value="MGI"/>
</dbReference>
<dbReference type="GO" id="GO:0070374">
    <property type="term" value="P:positive regulation of ERK1 and ERK2 cascade"/>
    <property type="evidence" value="ECO:0000266"/>
    <property type="project" value="MGI"/>
</dbReference>
<dbReference type="GO" id="GO:0060043">
    <property type="term" value="P:regulation of cardiac muscle cell proliferation"/>
    <property type="evidence" value="ECO:0000316"/>
    <property type="project" value="MGI"/>
</dbReference>
<dbReference type="GO" id="GO:0045664">
    <property type="term" value="P:regulation of neuron differentiation"/>
    <property type="evidence" value="ECO:0000315"/>
    <property type="project" value="ParkinsonsUK-UCL"/>
</dbReference>
<dbReference type="CDD" id="cd23327">
    <property type="entry name" value="beta-trefoil_FGF20"/>
    <property type="match status" value="1"/>
</dbReference>
<dbReference type="FunFam" id="2.80.10.50:FF:000004">
    <property type="entry name" value="Fibroblast growth factor"/>
    <property type="match status" value="1"/>
</dbReference>
<dbReference type="Gene3D" id="2.80.10.50">
    <property type="match status" value="1"/>
</dbReference>
<dbReference type="InterPro" id="IPR002209">
    <property type="entry name" value="Fibroblast_GF_fam"/>
</dbReference>
<dbReference type="InterPro" id="IPR008996">
    <property type="entry name" value="IL1/FGF"/>
</dbReference>
<dbReference type="PANTHER" id="PTHR11486">
    <property type="entry name" value="FIBROBLAST GROWTH FACTOR"/>
    <property type="match status" value="1"/>
</dbReference>
<dbReference type="Pfam" id="PF00167">
    <property type="entry name" value="FGF"/>
    <property type="match status" value="1"/>
</dbReference>
<dbReference type="PRINTS" id="PR00263">
    <property type="entry name" value="HBGFFGF"/>
</dbReference>
<dbReference type="PRINTS" id="PR00262">
    <property type="entry name" value="IL1HBGF"/>
</dbReference>
<dbReference type="SMART" id="SM00442">
    <property type="entry name" value="FGF"/>
    <property type="match status" value="1"/>
</dbReference>
<dbReference type="SUPFAM" id="SSF50353">
    <property type="entry name" value="Cytokine"/>
    <property type="match status" value="1"/>
</dbReference>
<dbReference type="PROSITE" id="PS00247">
    <property type="entry name" value="HBGF_FGF"/>
    <property type="match status" value="1"/>
</dbReference>
<gene>
    <name type="primary">Fgf20</name>
</gene>